<evidence type="ECO:0000255" key="1">
    <source>
        <dbReference type="HAMAP-Rule" id="MF_00401"/>
    </source>
</evidence>
<evidence type="ECO:0000305" key="2"/>
<proteinExistence type="inferred from homology"/>
<keyword id="KW-0049">Antioxidant</keyword>
<keyword id="KW-0963">Cytoplasm</keyword>
<keyword id="KW-1015">Disulfide bond</keyword>
<keyword id="KW-0560">Oxidoreductase</keyword>
<keyword id="KW-0575">Peroxidase</keyword>
<keyword id="KW-0676">Redox-active center</keyword>
<keyword id="KW-1185">Reference proteome</keyword>
<dbReference type="EC" id="1.11.1.24" evidence="1"/>
<dbReference type="EMBL" id="AE000666">
    <property type="protein sequence ID" value="AAB84665.1"/>
    <property type="status" value="ALT_INIT"/>
    <property type="molecule type" value="Genomic_DNA"/>
</dbReference>
<dbReference type="PIR" id="B69079">
    <property type="entry name" value="B69079"/>
</dbReference>
<dbReference type="RefSeq" id="WP_010875798.1">
    <property type="nucleotide sequence ID" value="NC_000916.1"/>
</dbReference>
<dbReference type="SMR" id="O26262"/>
<dbReference type="FunCoup" id="O26262">
    <property type="interactions" value="27"/>
</dbReference>
<dbReference type="STRING" id="187420.MTH_159"/>
<dbReference type="PaxDb" id="187420-MTH_159"/>
<dbReference type="EnsemblBacteria" id="AAB84665">
    <property type="protein sequence ID" value="AAB84665"/>
    <property type="gene ID" value="MTH_159"/>
</dbReference>
<dbReference type="GeneID" id="1470120"/>
<dbReference type="KEGG" id="mth:MTH_159"/>
<dbReference type="PATRIC" id="fig|187420.15.peg.131"/>
<dbReference type="HOGENOM" id="CLU_042529_4_4_2"/>
<dbReference type="InParanoid" id="O26262"/>
<dbReference type="Proteomes" id="UP000005223">
    <property type="component" value="Chromosome"/>
</dbReference>
<dbReference type="GO" id="GO:0005829">
    <property type="term" value="C:cytosol"/>
    <property type="evidence" value="ECO:0007669"/>
    <property type="project" value="TreeGrafter"/>
</dbReference>
<dbReference type="GO" id="GO:0008379">
    <property type="term" value="F:thioredoxin peroxidase activity"/>
    <property type="evidence" value="ECO:0007669"/>
    <property type="project" value="TreeGrafter"/>
</dbReference>
<dbReference type="GO" id="GO:0045454">
    <property type="term" value="P:cell redox homeostasis"/>
    <property type="evidence" value="ECO:0007669"/>
    <property type="project" value="TreeGrafter"/>
</dbReference>
<dbReference type="GO" id="GO:0033554">
    <property type="term" value="P:cellular response to stress"/>
    <property type="evidence" value="ECO:0007669"/>
    <property type="project" value="TreeGrafter"/>
</dbReference>
<dbReference type="GO" id="GO:0042744">
    <property type="term" value="P:hydrogen peroxide catabolic process"/>
    <property type="evidence" value="ECO:0007669"/>
    <property type="project" value="TreeGrafter"/>
</dbReference>
<dbReference type="GO" id="GO:0006979">
    <property type="term" value="P:response to oxidative stress"/>
    <property type="evidence" value="ECO:0007669"/>
    <property type="project" value="TreeGrafter"/>
</dbReference>
<dbReference type="CDD" id="cd03016">
    <property type="entry name" value="PRX_1cys"/>
    <property type="match status" value="1"/>
</dbReference>
<dbReference type="FunFam" id="3.30.1020.10:FF:000002">
    <property type="entry name" value="Peroxiredoxin"/>
    <property type="match status" value="1"/>
</dbReference>
<dbReference type="Gene3D" id="3.30.1020.10">
    <property type="entry name" value="Antioxidant, Horf6, Chain A, domain2"/>
    <property type="match status" value="1"/>
</dbReference>
<dbReference type="Gene3D" id="3.40.30.10">
    <property type="entry name" value="Glutaredoxin"/>
    <property type="match status" value="1"/>
</dbReference>
<dbReference type="HAMAP" id="MF_00401">
    <property type="entry name" value="Peroxiredoxin"/>
    <property type="match status" value="1"/>
</dbReference>
<dbReference type="InterPro" id="IPR000866">
    <property type="entry name" value="AhpC/TSA"/>
</dbReference>
<dbReference type="InterPro" id="IPR050217">
    <property type="entry name" value="Peroxiredoxin"/>
</dbReference>
<dbReference type="InterPro" id="IPR024706">
    <property type="entry name" value="Peroxiredoxin_AhpC-typ"/>
</dbReference>
<dbReference type="InterPro" id="IPR019479">
    <property type="entry name" value="Peroxiredoxin_C"/>
</dbReference>
<dbReference type="InterPro" id="IPR022915">
    <property type="entry name" value="Peroxiredoxin_TDXH"/>
</dbReference>
<dbReference type="InterPro" id="IPR045020">
    <property type="entry name" value="PRX_1cys"/>
</dbReference>
<dbReference type="InterPro" id="IPR036249">
    <property type="entry name" value="Thioredoxin-like_sf"/>
</dbReference>
<dbReference type="InterPro" id="IPR013766">
    <property type="entry name" value="Thioredoxin_domain"/>
</dbReference>
<dbReference type="NCBIfam" id="NF009668">
    <property type="entry name" value="PRK13189.1"/>
    <property type="match status" value="1"/>
</dbReference>
<dbReference type="PANTHER" id="PTHR10681:SF171">
    <property type="entry name" value="PEROXIREDOXIN 4"/>
    <property type="match status" value="1"/>
</dbReference>
<dbReference type="PANTHER" id="PTHR10681">
    <property type="entry name" value="THIOREDOXIN PEROXIDASE"/>
    <property type="match status" value="1"/>
</dbReference>
<dbReference type="Pfam" id="PF10417">
    <property type="entry name" value="1-cysPrx_C"/>
    <property type="match status" value="1"/>
</dbReference>
<dbReference type="Pfam" id="PF00578">
    <property type="entry name" value="AhpC-TSA"/>
    <property type="match status" value="1"/>
</dbReference>
<dbReference type="PIRSF" id="PIRSF000239">
    <property type="entry name" value="AHPC"/>
    <property type="match status" value="1"/>
</dbReference>
<dbReference type="SUPFAM" id="SSF52833">
    <property type="entry name" value="Thioredoxin-like"/>
    <property type="match status" value="1"/>
</dbReference>
<dbReference type="PROSITE" id="PS51352">
    <property type="entry name" value="THIOREDOXIN_2"/>
    <property type="match status" value="1"/>
</dbReference>
<feature type="chain" id="PRO_0000135158" description="Peroxiredoxin">
    <location>
        <begin position="1"/>
        <end position="209"/>
    </location>
</feature>
<feature type="domain" description="Thioredoxin" evidence="1">
    <location>
        <begin position="2"/>
        <end position="156"/>
    </location>
</feature>
<feature type="active site" description="Cysteine sulfenic acid (-SOH) intermediate" evidence="1">
    <location>
        <position position="44"/>
    </location>
</feature>
<feature type="binding site" evidence="1">
    <location>
        <position position="119"/>
    </location>
    <ligand>
        <name>substrate</name>
    </ligand>
</feature>
<feature type="disulfide bond" description="Interchain (with C-204); in linked form" evidence="1">
    <location>
        <position position="44"/>
    </location>
</feature>
<feature type="disulfide bond" description="Alternate" evidence="1">
    <location>
        <begin position="198"/>
        <end position="204"/>
    </location>
</feature>
<feature type="disulfide bond" description="Interchain (with C-44); in linked form" evidence="1">
    <location>
        <position position="204"/>
    </location>
</feature>
<comment type="function">
    <text evidence="1">Thiol-specific peroxidase that catalyzes the reduction of hydrogen peroxide and organic hydroperoxides to water and alcohols, respectively. Plays a role in cell protection against oxidative stress by detoxifying peroxides.</text>
</comment>
<comment type="catalytic activity">
    <reaction evidence="1">
        <text>a hydroperoxide + [thioredoxin]-dithiol = an alcohol + [thioredoxin]-disulfide + H2O</text>
        <dbReference type="Rhea" id="RHEA:62620"/>
        <dbReference type="Rhea" id="RHEA-COMP:10698"/>
        <dbReference type="Rhea" id="RHEA-COMP:10700"/>
        <dbReference type="ChEBI" id="CHEBI:15377"/>
        <dbReference type="ChEBI" id="CHEBI:29950"/>
        <dbReference type="ChEBI" id="CHEBI:30879"/>
        <dbReference type="ChEBI" id="CHEBI:35924"/>
        <dbReference type="ChEBI" id="CHEBI:50058"/>
        <dbReference type="EC" id="1.11.1.24"/>
    </reaction>
</comment>
<comment type="subunit">
    <text evidence="1">Homodecamer. Pentamer of dimers that assemble into a ring structure.</text>
</comment>
<comment type="subcellular location">
    <subcellularLocation>
        <location evidence="1">Cytoplasm</location>
    </subcellularLocation>
</comment>
<comment type="miscellaneous">
    <text evidence="1">The active site is a conserved redox-active cysteine residue, the peroxidatic cysteine (C(P)), which makes the nucleophilic attack on the peroxide substrate. The peroxide oxidizes the C(P)-SH to cysteine sulfenic acid (C(P)-SOH), which then reacts with another cysteine residue, the resolving cysteine (C(R)), to form a disulfide bridge. The disulfide is subsequently reduced by an appropriate electron donor to complete the catalytic cycle. Although the primary sequence of this enzyme is similar to those of the 1-Cys Prx6 enzymes, its catalytic properties resemble those of the typical 2-Cys Prxs and C(R) is provided by the other dimeric subunit to form an intersubunit disulfide. The disulfide is subsequently reduced by thioredoxin.</text>
</comment>
<comment type="similarity">
    <text evidence="1">Belongs to the peroxiredoxin family. Prx6 subfamily.</text>
</comment>
<comment type="sequence caution" evidence="2">
    <conflict type="erroneous initiation">
        <sequence resource="EMBL-CDS" id="AAB84665"/>
    </conflict>
</comment>
<reference key="1">
    <citation type="journal article" date="1997" name="J. Bacteriol.">
        <title>Complete genome sequence of Methanobacterium thermoautotrophicum deltaH: functional analysis and comparative genomics.</title>
        <authorList>
            <person name="Smith D.R."/>
            <person name="Doucette-Stamm L.A."/>
            <person name="Deloughery C."/>
            <person name="Lee H.-M."/>
            <person name="Dubois J."/>
            <person name="Aldredge T."/>
            <person name="Bashirzadeh R."/>
            <person name="Blakely D."/>
            <person name="Cook R."/>
            <person name="Gilbert K."/>
            <person name="Harrison D."/>
            <person name="Hoang L."/>
            <person name="Keagle P."/>
            <person name="Lumm W."/>
            <person name="Pothier B."/>
            <person name="Qiu D."/>
            <person name="Spadafora R."/>
            <person name="Vicare R."/>
            <person name="Wang Y."/>
            <person name="Wierzbowski J."/>
            <person name="Gibson R."/>
            <person name="Jiwani N."/>
            <person name="Caruso A."/>
            <person name="Bush D."/>
            <person name="Safer H."/>
            <person name="Patwell D."/>
            <person name="Prabhakar S."/>
            <person name="McDougall S."/>
            <person name="Shimer G."/>
            <person name="Goyal A."/>
            <person name="Pietrovski S."/>
            <person name="Church G.M."/>
            <person name="Daniels C.J."/>
            <person name="Mao J.-I."/>
            <person name="Rice P."/>
            <person name="Noelling J."/>
            <person name="Reeve J.N."/>
        </authorList>
    </citation>
    <scope>NUCLEOTIDE SEQUENCE [LARGE SCALE GENOMIC DNA]</scope>
    <source>
        <strain>ATCC 29096 / DSM 1053 / JCM 10044 / NBRC 100330 / Delta H</strain>
    </source>
</reference>
<sequence>MPLIGDKFPEMEVQTTHGPMELPDEFEGKWFILFSHPADFTPVCTTEFVAFQEVYPELRELDCELVGLSVDQVFSHIKWIEWIAENLDTEIEFPVIADTGRVADTLGLIHPARPTNTVRAVFVVDPEGIIRAILYYPQELGRNIPEIVRMIRAFRVIDAEGVAAPANWPDNQLIGDHVIVPPASDIETARKRKDEYECYDWWLCTQSRG</sequence>
<accession>O26262</accession>
<gene>
    <name type="ordered locus">MTH_159</name>
</gene>
<protein>
    <recommendedName>
        <fullName evidence="1">Peroxiredoxin</fullName>
        <ecNumber evidence="1">1.11.1.24</ecNumber>
    </recommendedName>
    <alternativeName>
        <fullName evidence="1">Thioredoxin peroxidase</fullName>
    </alternativeName>
    <alternativeName>
        <fullName evidence="1">Thioredoxin-dependent peroxiredoxin</fullName>
    </alternativeName>
</protein>
<organism>
    <name type="scientific">Methanothermobacter thermautotrophicus (strain ATCC 29096 / DSM 1053 / JCM 10044 / NBRC 100330 / Delta H)</name>
    <name type="common">Methanobacterium thermoautotrophicum</name>
    <dbReference type="NCBI Taxonomy" id="187420"/>
    <lineage>
        <taxon>Archaea</taxon>
        <taxon>Methanobacteriati</taxon>
        <taxon>Methanobacteriota</taxon>
        <taxon>Methanomada group</taxon>
        <taxon>Methanobacteria</taxon>
        <taxon>Methanobacteriales</taxon>
        <taxon>Methanobacteriaceae</taxon>
        <taxon>Methanothermobacter</taxon>
    </lineage>
</organism>
<name>TDXH_METTH</name>